<protein>
    <recommendedName>
        <fullName evidence="1">Non-structural glycoprotein 4</fullName>
        <shortName evidence="1">NSP4</shortName>
    </recommendedName>
    <alternativeName>
        <fullName evidence="1">NCVP5</fullName>
    </alternativeName>
    <alternativeName>
        <fullName evidence="1">NS28</fullName>
    </alternativeName>
</protein>
<comment type="function">
    <text evidence="1">Plays an essential role in the virus replication cycle by acting as a viroporin. Creates a pore in the host endoplasmic reticulum and as a consequence releases Ca(2+) in the cytoplasm of infected cell. In turn, high levels of cytoplasmic calcium trigger membrane trafficking and transport of viral ER-associated proteins to viroplasms, sites of viral genome replication and immature particle assembly.</text>
</comment>
<comment type="function">
    <text evidence="1">The secreted form acts as an enterotoxin that causes phospholipase C-dependent elevation of the intracellular calcium concentration in host intestinal mucosa cells. Increased concentration of intracellular calcium disrupts the cytoskeleton and the tight junctions, raising the paracellular permeability. Potentiates chloride ion secretion through a calcium ion-dependent signaling pathway, inducing age-dependent diarrhea. To perform this enterotoxigenic role in vivo, NSP4 is released from infected enterocytes in a soluble form capable of diffusing within the intestinal lumen and interacting with host plasma membrane receptors on neighboring epithelial cells such as integrins ITGA1/ITGB1 and ITGA2/ITGB1.</text>
</comment>
<comment type="subunit">
    <text evidence="1">Homotetramer. Interacts with the immature particle in the viroplasm. Interacts with host CAV1, early and late in infection. Interacts with host integrin ITGA1/ITGB1 heterodimer. Interacts with host integrin ITGA2/ITGB1 heterodimer. Interaction with microtubules blocks trafficking to the Golgi apparatus.</text>
</comment>
<comment type="subcellular location">
    <subcellularLocation>
        <location evidence="1">Host rough endoplasmic reticulum membrane</location>
        <topology evidence="1">Single-pass type III membrane protein</topology>
    </subcellularLocation>
    <subcellularLocation>
        <location evidence="1">Host membrane</location>
        <location evidence="1">Host caveola</location>
        <topology evidence="1">Single-pass type III membrane protein</topology>
    </subcellularLocation>
    <subcellularLocation>
        <location evidence="1">Secreted</location>
    </subcellularLocation>
    <text evidence="1">NSP4 also localizes in vesicular structures which contain autophagosomal markers and associate with viroplasms in virus-infected cells. Additionally, a soluble form of glycosylated NSP4 is secreted despite retention of its transmembrane domain.</text>
</comment>
<comment type="domain">
    <text evidence="1">Binds 1 calcium ion per tetramer.</text>
</comment>
<comment type="PTM">
    <text evidence="1">The N-glycosyl content is primarily Man(9)GlcNAc, with a small amount of Man(8)GlcNAc.</text>
</comment>
<comment type="similarity">
    <text evidence="1">Belongs to the rotavirus NSP4 family.</text>
</comment>
<proteinExistence type="inferred from homology"/>
<organism>
    <name type="scientific">Rotavirus A (strain RVA/Human/United States/P/1974/G3P1A[8])</name>
    <name type="common">RV-A</name>
    <dbReference type="NCBI Taxonomy" id="10957"/>
    <lineage>
        <taxon>Viruses</taxon>
        <taxon>Riboviria</taxon>
        <taxon>Orthornavirae</taxon>
        <taxon>Duplornaviricota</taxon>
        <taxon>Resentoviricetes</taxon>
        <taxon>Reovirales</taxon>
        <taxon>Sedoreoviridae</taxon>
        <taxon>Rotavirus</taxon>
        <taxon>Rotavirus A</taxon>
    </lineage>
</organism>
<sequence length="175" mass="20237">MDKLADLNYTLSVITLMNDTLHSIIQDPGMAYFPYIASVLTVLFTLHKASIPTMKIALKTSKCSYKVIKYCIVTIINTLLKLAGYKEQVTTKDEIEQQMDRIVKEMRRQLEMIDKLTTREIEQVELLKRIHDNLITRSVDVIDMSKEFNQKNIKTLDEWESGKNPYEPSEVTASM</sequence>
<name>NSP4_ROTHP</name>
<dbReference type="EMBL" id="EF672603">
    <property type="protein sequence ID" value="ABV53281.1"/>
    <property type="molecule type" value="Genomic_RNA"/>
</dbReference>
<dbReference type="SMR" id="B3SRV6"/>
<dbReference type="Proteomes" id="UP000007047">
    <property type="component" value="Genome"/>
</dbReference>
<dbReference type="GO" id="GO:0005576">
    <property type="term" value="C:extracellular region"/>
    <property type="evidence" value="ECO:0007669"/>
    <property type="project" value="UniProtKB-SubCell"/>
</dbReference>
<dbReference type="GO" id="GO:0044155">
    <property type="term" value="C:host caveola"/>
    <property type="evidence" value="ECO:0007669"/>
    <property type="project" value="UniProtKB-SubCell"/>
</dbReference>
<dbReference type="GO" id="GO:0044169">
    <property type="term" value="C:host cell rough endoplasmic reticulum membrane"/>
    <property type="evidence" value="ECO:0007669"/>
    <property type="project" value="UniProtKB-SubCell"/>
</dbReference>
<dbReference type="GO" id="GO:0016020">
    <property type="term" value="C:membrane"/>
    <property type="evidence" value="ECO:0007669"/>
    <property type="project" value="UniProtKB-UniRule"/>
</dbReference>
<dbReference type="GO" id="GO:0015267">
    <property type="term" value="F:channel activity"/>
    <property type="evidence" value="ECO:0007669"/>
    <property type="project" value="UniProtKB-KW"/>
</dbReference>
<dbReference type="GO" id="GO:0046872">
    <property type="term" value="F:metal ion binding"/>
    <property type="evidence" value="ECO:0007669"/>
    <property type="project" value="UniProtKB-UniRule"/>
</dbReference>
<dbReference type="GO" id="GO:0090729">
    <property type="term" value="F:toxin activity"/>
    <property type="evidence" value="ECO:0007669"/>
    <property type="project" value="UniProtKB-UniRule"/>
</dbReference>
<dbReference type="GO" id="GO:0034220">
    <property type="term" value="P:monoatomic ion transmembrane transport"/>
    <property type="evidence" value="ECO:0007669"/>
    <property type="project" value="UniProtKB-KW"/>
</dbReference>
<dbReference type="GO" id="GO:0039520">
    <property type="term" value="P:symbiont-mediated activation of host autophagy"/>
    <property type="evidence" value="ECO:0007669"/>
    <property type="project" value="UniProtKB-KW"/>
</dbReference>
<dbReference type="GO" id="GO:0016032">
    <property type="term" value="P:viral process"/>
    <property type="evidence" value="ECO:0007669"/>
    <property type="project" value="UniProtKB-UniRule"/>
</dbReference>
<dbReference type="Gene3D" id="1.20.5.430">
    <property type="match status" value="1"/>
</dbReference>
<dbReference type="HAMAP" id="MF_04091">
    <property type="entry name" value="ROTA_NSP4"/>
    <property type="match status" value="1"/>
</dbReference>
<dbReference type="InterPro" id="IPR002107">
    <property type="entry name" value="Rotavirus_NSP4"/>
</dbReference>
<dbReference type="Pfam" id="PF01452">
    <property type="entry name" value="Rota_NSP4"/>
    <property type="match status" value="1"/>
</dbReference>
<dbReference type="SUPFAM" id="SSF58030">
    <property type="entry name" value="Rotavirus nonstructural proteins"/>
    <property type="match status" value="1"/>
</dbReference>
<reference key="1">
    <citation type="journal article" date="2008" name="J. Virol.">
        <title>Group A human rotavirus genomics: evidence that gene constellations are influenced by viral protein interactions.</title>
        <authorList>
            <person name="Heiman E.M."/>
            <person name="McDonald S.M."/>
            <person name="Barro M."/>
            <person name="Taraporewala Z.F."/>
            <person name="Bar-Magen T."/>
            <person name="Patton J.T."/>
        </authorList>
    </citation>
    <scope>NUCLEOTIDE SEQUENCE [GENOMIC RNA]</scope>
</reference>
<evidence type="ECO:0000255" key="1">
    <source>
        <dbReference type="HAMAP-Rule" id="MF_04091"/>
    </source>
</evidence>
<feature type="chain" id="PRO_0000369490" description="Non-structural glycoprotein 4">
    <location>
        <begin position="1"/>
        <end position="175"/>
    </location>
</feature>
<feature type="topological domain" description="Lumenal" evidence="1">
    <location>
        <begin position="1"/>
        <end position="28"/>
    </location>
</feature>
<feature type="transmembrane region" description="Helical; Signal-anchor for type III membrane protein" evidence="1">
    <location>
        <begin position="29"/>
        <end position="51"/>
    </location>
</feature>
<feature type="topological domain" description="Cytoplasmic" evidence="1">
    <location>
        <begin position="52"/>
        <end position="175"/>
    </location>
</feature>
<feature type="binding site" evidence="1">
    <location>
        <position position="120"/>
    </location>
    <ligand>
        <name>Ca(2+)</name>
        <dbReference type="ChEBI" id="CHEBI:29108"/>
    </ligand>
</feature>
<feature type="binding site" evidence="1">
    <location>
        <position position="123"/>
    </location>
    <ligand>
        <name>Ca(2+)</name>
        <dbReference type="ChEBI" id="CHEBI:29108"/>
    </ligand>
</feature>
<feature type="glycosylation site" description="N-linked (GlcNAc...) asparagine; by host" evidence="1">
    <location>
        <position position="8"/>
    </location>
</feature>
<feature type="glycosylation site" description="N-linked (GlcNAc...) asparagine; by host" evidence="1">
    <location>
        <position position="18"/>
    </location>
</feature>
<accession>B3SRV6</accession>
<keyword id="KW-1072">Activation of host autophagy by virus</keyword>
<keyword id="KW-0106">Calcium</keyword>
<keyword id="KW-0260">Enterotoxin</keyword>
<keyword id="KW-0325">Glycoprotein</keyword>
<keyword id="KW-1038">Host endoplasmic reticulum</keyword>
<keyword id="KW-1043">Host membrane</keyword>
<keyword id="KW-0945">Host-virus interaction</keyword>
<keyword id="KW-0407">Ion channel</keyword>
<keyword id="KW-0406">Ion transport</keyword>
<keyword id="KW-0472">Membrane</keyword>
<keyword id="KW-0479">Metal-binding</keyword>
<keyword id="KW-0964">Secreted</keyword>
<keyword id="KW-0735">Signal-anchor</keyword>
<keyword id="KW-0800">Toxin</keyword>
<keyword id="KW-0812">Transmembrane</keyword>
<keyword id="KW-1133">Transmembrane helix</keyword>
<keyword id="KW-0813">Transport</keyword>
<keyword id="KW-1182">Viral ion channel</keyword>
<keyword id="KW-0843">Virulence</keyword>
<organismHost>
    <name type="scientific">Homo sapiens</name>
    <name type="common">Human</name>
    <dbReference type="NCBI Taxonomy" id="9606"/>
</organismHost>